<sequence>MFERLQSLDERYERLNELLSDPEVISDSNKLREYSKEQADMEETVQVYREYKTVMDQYQDAKEMLEDKLDDEMYAMVKEEIDELATRKEDLEAKLKVLLLPKDPNDDKNVIVEVRGAAGGDEAQLFAADLYKMYARYAEAQGWKIEVIEASSTELGGYKEIIFSVNGKGAYSKLKYENGAHRVQRVPQTESGGRIHTSTATVAVLPEAEEVEVDIHEKDIRVDTFASSGPGGQSVNTTMSAVRLTHLPTGIVVSCQDEKSQIKNKEKAMKVLRARIYDKFQQEAQAEYDQTRKSAVGTGDRSERIRTYNFPQSRVTDHRIGLTLQKLEQILQGKLDEIIESLIVHEQAELMKQQED</sequence>
<keyword id="KW-0963">Cytoplasm</keyword>
<keyword id="KW-0488">Methylation</keyword>
<keyword id="KW-0648">Protein biosynthesis</keyword>
<keyword id="KW-1185">Reference proteome</keyword>
<organism>
    <name type="scientific">Halalkalibacterium halodurans (strain ATCC BAA-125 / DSM 18197 / FERM 7344 / JCM 9153 / C-125)</name>
    <name type="common">Bacillus halodurans</name>
    <dbReference type="NCBI Taxonomy" id="272558"/>
    <lineage>
        <taxon>Bacteria</taxon>
        <taxon>Bacillati</taxon>
        <taxon>Bacillota</taxon>
        <taxon>Bacilli</taxon>
        <taxon>Bacillales</taxon>
        <taxon>Bacillaceae</taxon>
        <taxon>Halalkalibacterium (ex Joshi et al. 2022)</taxon>
    </lineage>
</organism>
<dbReference type="EMBL" id="BA000004">
    <property type="protein sequence ID" value="BAB07494.1"/>
    <property type="molecule type" value="Genomic_DNA"/>
</dbReference>
<dbReference type="PIR" id="G84121">
    <property type="entry name" value="G84121"/>
</dbReference>
<dbReference type="RefSeq" id="WP_010899900.1">
    <property type="nucleotide sequence ID" value="NC_002570.2"/>
</dbReference>
<dbReference type="SMR" id="Q9K6F4"/>
<dbReference type="STRING" id="272558.gene:10729688"/>
<dbReference type="GeneID" id="87599321"/>
<dbReference type="KEGG" id="bha:BH3775"/>
<dbReference type="eggNOG" id="COG0216">
    <property type="taxonomic scope" value="Bacteria"/>
</dbReference>
<dbReference type="HOGENOM" id="CLU_036856_0_1_9"/>
<dbReference type="OrthoDB" id="9806673at2"/>
<dbReference type="Proteomes" id="UP000001258">
    <property type="component" value="Chromosome"/>
</dbReference>
<dbReference type="GO" id="GO:0005737">
    <property type="term" value="C:cytoplasm"/>
    <property type="evidence" value="ECO:0007669"/>
    <property type="project" value="UniProtKB-SubCell"/>
</dbReference>
<dbReference type="GO" id="GO:0016149">
    <property type="term" value="F:translation release factor activity, codon specific"/>
    <property type="evidence" value="ECO:0007669"/>
    <property type="project" value="UniProtKB-UniRule"/>
</dbReference>
<dbReference type="FunFam" id="3.30.160.20:FF:000004">
    <property type="entry name" value="Peptide chain release factor 1"/>
    <property type="match status" value="1"/>
</dbReference>
<dbReference type="FunFam" id="3.30.70.1660:FF:000002">
    <property type="entry name" value="Peptide chain release factor 1"/>
    <property type="match status" value="1"/>
</dbReference>
<dbReference type="FunFam" id="3.30.70.1660:FF:000004">
    <property type="entry name" value="Peptide chain release factor 1"/>
    <property type="match status" value="1"/>
</dbReference>
<dbReference type="Gene3D" id="3.30.160.20">
    <property type="match status" value="1"/>
</dbReference>
<dbReference type="Gene3D" id="3.30.70.1660">
    <property type="match status" value="1"/>
</dbReference>
<dbReference type="Gene3D" id="6.10.140.1950">
    <property type="match status" value="1"/>
</dbReference>
<dbReference type="HAMAP" id="MF_00093">
    <property type="entry name" value="Rel_fac_1"/>
    <property type="match status" value="1"/>
</dbReference>
<dbReference type="InterPro" id="IPR005139">
    <property type="entry name" value="PCRF"/>
</dbReference>
<dbReference type="InterPro" id="IPR000352">
    <property type="entry name" value="Pep_chain_release_fac_I"/>
</dbReference>
<dbReference type="InterPro" id="IPR045853">
    <property type="entry name" value="Pep_chain_release_fac_I_sf"/>
</dbReference>
<dbReference type="InterPro" id="IPR050057">
    <property type="entry name" value="Prokaryotic/Mito_RF"/>
</dbReference>
<dbReference type="InterPro" id="IPR004373">
    <property type="entry name" value="RF-1"/>
</dbReference>
<dbReference type="NCBIfam" id="TIGR00019">
    <property type="entry name" value="prfA"/>
    <property type="match status" value="1"/>
</dbReference>
<dbReference type="NCBIfam" id="NF001859">
    <property type="entry name" value="PRK00591.1"/>
    <property type="match status" value="1"/>
</dbReference>
<dbReference type="PANTHER" id="PTHR43804">
    <property type="entry name" value="LD18447P"/>
    <property type="match status" value="1"/>
</dbReference>
<dbReference type="PANTHER" id="PTHR43804:SF7">
    <property type="entry name" value="LD18447P"/>
    <property type="match status" value="1"/>
</dbReference>
<dbReference type="Pfam" id="PF03462">
    <property type="entry name" value="PCRF"/>
    <property type="match status" value="1"/>
</dbReference>
<dbReference type="Pfam" id="PF00472">
    <property type="entry name" value="RF-1"/>
    <property type="match status" value="1"/>
</dbReference>
<dbReference type="SMART" id="SM00937">
    <property type="entry name" value="PCRF"/>
    <property type="match status" value="1"/>
</dbReference>
<dbReference type="SUPFAM" id="SSF75620">
    <property type="entry name" value="Release factor"/>
    <property type="match status" value="1"/>
</dbReference>
<dbReference type="PROSITE" id="PS00745">
    <property type="entry name" value="RF_PROK_I"/>
    <property type="match status" value="1"/>
</dbReference>
<name>RF1_HALH5</name>
<feature type="chain" id="PRO_0000177630" description="Peptide chain release factor 1">
    <location>
        <begin position="1"/>
        <end position="356"/>
    </location>
</feature>
<feature type="modified residue" description="N5-methylglutamine" evidence="1">
    <location>
        <position position="233"/>
    </location>
</feature>
<proteinExistence type="inferred from homology"/>
<reference key="1">
    <citation type="journal article" date="2000" name="Nucleic Acids Res.">
        <title>Complete genome sequence of the alkaliphilic bacterium Bacillus halodurans and genomic sequence comparison with Bacillus subtilis.</title>
        <authorList>
            <person name="Takami H."/>
            <person name="Nakasone K."/>
            <person name="Takaki Y."/>
            <person name="Maeno G."/>
            <person name="Sasaki R."/>
            <person name="Masui N."/>
            <person name="Fuji F."/>
            <person name="Hirama C."/>
            <person name="Nakamura Y."/>
            <person name="Ogasawara N."/>
            <person name="Kuhara S."/>
            <person name="Horikoshi K."/>
        </authorList>
    </citation>
    <scope>NUCLEOTIDE SEQUENCE [LARGE SCALE GENOMIC DNA]</scope>
    <source>
        <strain>ATCC BAA-125 / DSM 18197 / FERM 7344 / JCM 9153 / C-125</strain>
    </source>
</reference>
<evidence type="ECO:0000255" key="1">
    <source>
        <dbReference type="HAMAP-Rule" id="MF_00093"/>
    </source>
</evidence>
<gene>
    <name evidence="1" type="primary">prfA</name>
    <name type="ordered locus">BH3775</name>
</gene>
<protein>
    <recommendedName>
        <fullName evidence="1">Peptide chain release factor 1</fullName>
        <shortName evidence="1">RF-1</shortName>
    </recommendedName>
</protein>
<comment type="function">
    <text evidence="1">Peptide chain release factor 1 directs the termination of translation in response to the peptide chain termination codons UAG and UAA.</text>
</comment>
<comment type="subcellular location">
    <subcellularLocation>
        <location evidence="1">Cytoplasm</location>
    </subcellularLocation>
</comment>
<comment type="PTM">
    <text evidence="1">Methylated by PrmC. Methylation increases the termination efficiency of RF1.</text>
</comment>
<comment type="similarity">
    <text evidence="1">Belongs to the prokaryotic/mitochondrial release factor family.</text>
</comment>
<accession>Q9K6F4</accession>